<evidence type="ECO:0000255" key="1">
    <source>
        <dbReference type="PROSITE-ProRule" id="PRU00024"/>
    </source>
</evidence>
<evidence type="ECO:0000255" key="2">
    <source>
        <dbReference type="PROSITE-ProRule" id="PRU00357"/>
    </source>
</evidence>
<evidence type="ECO:0000256" key="3">
    <source>
        <dbReference type="SAM" id="MobiDB-lite"/>
    </source>
</evidence>
<evidence type="ECO:0000269" key="4">
    <source>
    </source>
</evidence>
<evidence type="ECO:0000269" key="5">
    <source>
    </source>
</evidence>
<evidence type="ECO:0000269" key="6">
    <source>
    </source>
</evidence>
<evidence type="ECO:0000303" key="7">
    <source>
    </source>
</evidence>
<evidence type="ECO:0000303" key="8">
    <source>
    </source>
</evidence>
<evidence type="ECO:0000303" key="9">
    <source>
    </source>
</evidence>
<evidence type="ECO:0000305" key="10"/>
<evidence type="ECO:0000312" key="11">
    <source>
        <dbReference type="EMBL" id="BAB19341.1"/>
    </source>
</evidence>
<evidence type="ECO:0000312" key="12">
    <source>
        <dbReference type="EMBL" id="BAC20631.1"/>
    </source>
</evidence>
<evidence type="ECO:0007829" key="13">
    <source>
        <dbReference type="PDB" id="7C9O"/>
    </source>
</evidence>
<comment type="function">
    <text evidence="4">Probable transcription factor involved in the regulation of flower development. Required for the promotion of flowering under short day (SD) conditions and the suppression of flowering under long day (LD) conditions. Positively regulates the floral activator HEADING DATE 3a (HD3A) under SD and negatively under LD conditions.</text>
</comment>
<comment type="subunit">
    <text evidence="5">Interacts with HAL3 in the dark.</text>
</comment>
<comment type="subcellular location">
    <subcellularLocation>
        <location evidence="5">Nucleus</location>
    </subcellularLocation>
</comment>
<comment type="induction">
    <text evidence="4">Expressed with a circadian rhythm showing a peak at night and then decreasing to reach the lowest levels around the middle of the day in LD conditions. The levels of expression in SD conditions are slightly lower.</text>
</comment>
<comment type="PTM">
    <text evidence="6">Phosphorylated by OSK4 in the presence of HDR1.</text>
</comment>
<comment type="polymorphism">
    <text>The cultivar Taichung 65 exhibits a long basic vegetative growth and reduced response to photoperiod due to loss-of-function alleles of HD1 and EHD1. This confers almost constant and sufficient vegetative growth periods even in low latitudes where short photoperiod conditions continue almost throughout the year.</text>
</comment>
<comment type="miscellaneous">
    <text>The GIGANTEA-CONSTANS-FLOWER LOCUS T (GI-CO-FT) pathway to control photoperiodic flowering under LD is conserved between Arabidopsis and rice, but the regulation of the downstream gene by the upstream regulatory gene is reversed in the two species. In Arabidopsis, GI acts as an activator of CO, which in turn activates the floral activator FT under LD conditions. In rice, GI activates HD1/CO in a similar manner to that in Arabidopsis. However, under LD conditions, HD1 suppresses HD3A/FT expression, causing the suppression of flowering.</text>
</comment>
<comment type="similarity">
    <text evidence="10">Belongs to the CONSTANS family.</text>
</comment>
<sequence length="395" mass="43075">MNYNFGGNVFDQEVGVGGEGGGGGEGSGCPWARPCDGCRAAPSVVYCRADAAYLCASCDARVHAANRVASRHERVRVCEACERAPAALACRADAAALCVACDVQVHSANPLPAITIPATSVLAEAVVATATVLGDKDEEVDSWLLLSKDSDNNNNNNNNNDNDNNDNNNSNSSNNGMYFGEVDEYFDLVGYNSYYDNRIENNQDRQYGMHEQQEQQQQQQEMQKEFAEKEGSECVVPSQITMLSEQQHSGYGVVGADQAASMTAGVSAYTDSISNSISFSSMEAGIVPDSTVIDMPNSRILTPAGAINLFSGPSLQMSLHFSSMDREARVLRYREKKKARKFEKTIRYETRKAYAEARPRIKGRFAKRSDVQIEVDQMFSTAALSDGSYGTVPWF</sequence>
<protein>
    <recommendedName>
        <fullName evidence="7">Zinc finger protein HD1</fullName>
    </recommendedName>
    <alternativeName>
        <fullName evidence="10">Protein CONSTANS-like</fullName>
    </alternativeName>
    <alternativeName>
        <fullName evidence="7">Protein HEADING DATE 1</fullName>
        <shortName evidence="7">OsHd1</shortName>
    </alternativeName>
    <alternativeName>
        <fullName evidence="8">Protein PHOTOPERIOD SENSITIVITY 1</fullName>
    </alternativeName>
</protein>
<feature type="chain" id="PRO_0000395303" description="Zinc finger protein HD1">
    <location>
        <begin position="1"/>
        <end position="395"/>
    </location>
</feature>
<feature type="domain" description="CCT" evidence="2">
    <location>
        <begin position="326"/>
        <end position="368"/>
    </location>
</feature>
<feature type="zinc finger region" description="B box-type 1; atypical" evidence="1">
    <location>
        <begin position="30"/>
        <end position="72"/>
    </location>
</feature>
<feature type="zinc finger region" description="B box-type 2; atypical" evidence="1">
    <location>
        <begin position="73"/>
        <end position="117"/>
    </location>
</feature>
<feature type="region of interest" description="Disordered" evidence="3">
    <location>
        <begin position="147"/>
        <end position="176"/>
    </location>
</feature>
<feature type="region of interest" description="Disordered" evidence="3">
    <location>
        <begin position="208"/>
        <end position="228"/>
    </location>
</feature>
<feature type="compositionally biased region" description="Low complexity" evidence="3">
    <location>
        <begin position="152"/>
        <end position="175"/>
    </location>
</feature>
<feature type="binding site" evidence="1">
    <location>
        <position position="35"/>
    </location>
    <ligand>
        <name>Zn(2+)</name>
        <dbReference type="ChEBI" id="CHEBI:29105"/>
        <label>1</label>
    </ligand>
</feature>
<feature type="binding site" evidence="1">
    <location>
        <position position="38"/>
    </location>
    <ligand>
        <name>Zn(2+)</name>
        <dbReference type="ChEBI" id="CHEBI:29105"/>
        <label>1</label>
    </ligand>
</feature>
<feature type="binding site" evidence="1">
    <location>
        <position position="58"/>
    </location>
    <ligand>
        <name>Zn(2+)</name>
        <dbReference type="ChEBI" id="CHEBI:29105"/>
        <label>1</label>
    </ligand>
</feature>
<feature type="binding site" evidence="1">
    <location>
        <position position="63"/>
    </location>
    <ligand>
        <name>Zn(2+)</name>
        <dbReference type="ChEBI" id="CHEBI:29105"/>
        <label>1</label>
    </ligand>
</feature>
<feature type="binding site" evidence="1">
    <location>
        <position position="78"/>
    </location>
    <ligand>
        <name>Zn(2+)</name>
        <dbReference type="ChEBI" id="CHEBI:29105"/>
        <label>2</label>
    </ligand>
</feature>
<feature type="binding site" evidence="1">
    <location>
        <position position="81"/>
    </location>
    <ligand>
        <name>Zn(2+)</name>
        <dbReference type="ChEBI" id="CHEBI:29105"/>
        <label>2</label>
    </ligand>
</feature>
<feature type="binding site" evidence="1">
    <location>
        <position position="101"/>
    </location>
    <ligand>
        <name>Zn(2+)</name>
        <dbReference type="ChEBI" id="CHEBI:29105"/>
        <label>2</label>
    </ligand>
</feature>
<feature type="binding site" evidence="1">
    <location>
        <position position="106"/>
    </location>
    <ligand>
        <name>Zn(2+)</name>
        <dbReference type="ChEBI" id="CHEBI:29105"/>
        <label>2</label>
    </ligand>
</feature>
<feature type="helix" evidence="13">
    <location>
        <begin position="324"/>
        <end position="338"/>
    </location>
</feature>
<feature type="helix" evidence="13">
    <location>
        <begin position="349"/>
        <end position="356"/>
    </location>
</feature>
<reference key="1">
    <citation type="journal article" date="2000" name="Plant Cell">
        <title>Hd1, a major photoperiod sensitivity quantitative trait locus in rice, is closely related to the Arabidopsis flowering time gene CONSTANS.</title>
        <authorList>
            <person name="Yano M."/>
            <person name="Katayose Y."/>
            <person name="Ashikari M."/>
            <person name="Yamanouchi U."/>
            <person name="Monna L."/>
            <person name="Fuse T."/>
            <person name="Baba T."/>
            <person name="Yamamoto K."/>
            <person name="Umehara Y."/>
            <person name="Nagamura Y."/>
            <person name="Sasaki T."/>
        </authorList>
    </citation>
    <scope>NUCLEOTIDE SEQUENCE [GENOMIC DNA / MRNA]</scope>
    <source>
        <strain>cv. Nipponbare</strain>
    </source>
</reference>
<reference key="2">
    <citation type="journal article" date="2008" name="Theor. Appl. Genet.">
        <title>Novel QTLs for photoperiodic flowering revealed by using reciprocal backcross inbred lines from crosses between japonica rice cultivars.</title>
        <authorList>
            <person name="Matsubara K."/>
            <person name="Kono I."/>
            <person name="Hori K."/>
            <person name="Nonoue Y."/>
            <person name="Ono N."/>
            <person name="Shomura A."/>
            <person name="Mizubayashi T."/>
            <person name="Yamamoto S."/>
            <person name="Yamanouchi U."/>
            <person name="Shirasawa K."/>
            <person name="Nishio T."/>
            <person name="Yano M."/>
        </authorList>
    </citation>
    <scope>NUCLEOTIDE SEQUENCE [GENOMIC DNA]</scope>
    <source>
        <strain>cv. Koshihikari</strain>
    </source>
</reference>
<reference key="3">
    <citation type="journal article" date="2005" name="Nature">
        <title>The map-based sequence of the rice genome.</title>
        <authorList>
            <consortium name="International rice genome sequencing project (IRGSP)"/>
        </authorList>
    </citation>
    <scope>NUCLEOTIDE SEQUENCE [LARGE SCALE GENOMIC DNA]</scope>
    <source>
        <strain>cv. Nipponbare</strain>
    </source>
</reference>
<reference key="4">
    <citation type="journal article" date="2008" name="Nucleic Acids Res.">
        <title>The rice annotation project database (RAP-DB): 2008 update.</title>
        <authorList>
            <consortium name="The rice annotation project (RAP)"/>
        </authorList>
    </citation>
    <scope>GENOME REANNOTATION</scope>
    <source>
        <strain>cv. Nipponbare</strain>
    </source>
</reference>
<reference key="5">
    <citation type="journal article" date="2013" name="Rice">
        <title>Improvement of the Oryza sativa Nipponbare reference genome using next generation sequence and optical map data.</title>
        <authorList>
            <person name="Kawahara Y."/>
            <person name="de la Bastide M."/>
            <person name="Hamilton J.P."/>
            <person name="Kanamori H."/>
            <person name="McCombie W.R."/>
            <person name="Ouyang S."/>
            <person name="Schwartz D.C."/>
            <person name="Tanaka T."/>
            <person name="Wu J."/>
            <person name="Zhou S."/>
            <person name="Childs K.L."/>
            <person name="Davidson R.M."/>
            <person name="Lin H."/>
            <person name="Quesada-Ocampo L."/>
            <person name="Vaillancourt B."/>
            <person name="Sakai H."/>
            <person name="Lee S.S."/>
            <person name="Kim J."/>
            <person name="Numa H."/>
            <person name="Itoh T."/>
            <person name="Buell C.R."/>
            <person name="Matsumoto T."/>
        </authorList>
    </citation>
    <scope>GENOME REANNOTATION</scope>
    <source>
        <strain>cv. Nipponbare</strain>
    </source>
</reference>
<reference key="6">
    <citation type="journal article" date="2003" name="Nature">
        <title>Adaptation of photoperiodic control pathways produces short-day flowering in rice.</title>
        <authorList>
            <person name="Hayama R."/>
            <person name="Yokoi S."/>
            <person name="Tamaki S."/>
            <person name="Yano M."/>
            <person name="Shimamoto K."/>
        </authorList>
    </citation>
    <scope>FUNCTION</scope>
    <scope>INDUCTION</scope>
</reference>
<reference key="7">
    <citation type="journal article" date="2004" name="Genes Dev.">
        <title>Ehd1, a B-type response regulator in rice, confers short-day promotion of flowering and controls FT-like gene expression independently of Hd1.</title>
        <authorList>
            <person name="Doi K."/>
            <person name="Izawa T."/>
            <person name="Fuse T."/>
            <person name="Yamanouchi U."/>
            <person name="Kubo T."/>
            <person name="Shimatani Z."/>
            <person name="Yano M."/>
            <person name="Yoshimura A."/>
        </authorList>
    </citation>
    <scope>POLYMORPHISM</scope>
</reference>
<reference key="8">
    <citation type="journal article" date="2016" name="Mol. Plant">
        <title>OsHAL3, a blue light-responsive protein, interacts with the floral regulator Hd1 to activate flowering in rice.</title>
        <authorList>
            <person name="Su L."/>
            <person name="Shan J.X."/>
            <person name="Gao J.P."/>
            <person name="Lin H.X."/>
        </authorList>
    </citation>
    <scope>INTERACTION WITH HAL3</scope>
    <scope>SUBCELLULAR LOCATION</scope>
</reference>
<reference key="9">
    <citation type="journal article" date="2016" name="PLoS Genet.">
        <title>The Oryza sativa regulator HDR1 associates with the kinase OsK4 to control photoperiodic flowering.</title>
        <authorList>
            <person name="Sun X."/>
            <person name="Zhang Z."/>
            <person name="Wu J."/>
            <person name="Cui X."/>
            <person name="Feng D."/>
            <person name="Wang K."/>
            <person name="Xu M."/>
            <person name="Zhou L."/>
            <person name="Han X."/>
            <person name="Gu X."/>
            <person name="Lu T."/>
        </authorList>
    </citation>
    <scope>PHOSPHORYLATION BY OSK4</scope>
</reference>
<reference key="10">
    <citation type="journal article" date="2020" name="Plant Cell">
        <title>Structural insight into DNA recognition by CCT/NF-YB/YC complexes in plant photoperiodic flowering.</title>
        <authorList>
            <person name="Shen C."/>
            <person name="Liu H."/>
            <person name="Guan Z."/>
            <person name="Yan J."/>
            <person name="Zheng T."/>
            <person name="Yan W."/>
            <person name="Wu C."/>
            <person name="Zhang Q."/>
            <person name="Yin P."/>
            <person name="Xing Y."/>
        </authorList>
    </citation>
    <scope>X-RAY CRYSTALLOGRAPHY (2.55 ANGSTROMS) OF 311-375</scope>
</reference>
<dbReference type="EMBL" id="AB041837">
    <property type="protein sequence ID" value="BAB17627.1"/>
    <property type="molecule type" value="Genomic_DNA"/>
</dbReference>
<dbReference type="EMBL" id="AB041838">
    <property type="protein sequence ID" value="BAB17628.1"/>
    <property type="molecule type" value="mRNA"/>
</dbReference>
<dbReference type="EMBL" id="AB375859">
    <property type="protein sequence ID" value="BAF99113.1"/>
    <property type="molecule type" value="Genomic_DNA"/>
</dbReference>
<dbReference type="EMBL" id="AP003044">
    <property type="protein sequence ID" value="BAB19341.1"/>
    <property type="molecule type" value="Genomic_DNA"/>
</dbReference>
<dbReference type="EMBL" id="AP005813">
    <property type="protein sequence ID" value="BAC20631.1"/>
    <property type="molecule type" value="Genomic_DNA"/>
</dbReference>
<dbReference type="EMBL" id="AP008212">
    <property type="protein sequence ID" value="BAF19292.1"/>
    <property type="molecule type" value="Genomic_DNA"/>
</dbReference>
<dbReference type="EMBL" id="AP014962">
    <property type="protein sequence ID" value="BAS97223.1"/>
    <property type="molecule type" value="Genomic_DNA"/>
</dbReference>
<dbReference type="RefSeq" id="XP_015641799.1">
    <property type="nucleotide sequence ID" value="XM_015786313.1"/>
</dbReference>
<dbReference type="PDB" id="7C9O">
    <property type="method" value="X-ray"/>
    <property type="resolution" value="2.55 A"/>
    <property type="chains" value="A=311-375"/>
</dbReference>
<dbReference type="PDBsum" id="7C9O"/>
<dbReference type="SMR" id="Q9FDX8"/>
<dbReference type="FunCoup" id="Q9FDX8">
    <property type="interactions" value="520"/>
</dbReference>
<dbReference type="STRING" id="39947.Q9FDX8"/>
<dbReference type="PaxDb" id="39947-Q9FDX8"/>
<dbReference type="EnsemblPlants" id="Os06t0275000-01">
    <property type="protein sequence ID" value="Os06t0275000-01"/>
    <property type="gene ID" value="Os06g0275000"/>
</dbReference>
<dbReference type="Gramene" id="Os06t0275000-01">
    <property type="protein sequence ID" value="Os06t0275000-01"/>
    <property type="gene ID" value="Os06g0275000"/>
</dbReference>
<dbReference type="KEGG" id="dosa:Os06g0275000"/>
<dbReference type="eggNOG" id="KOG1601">
    <property type="taxonomic scope" value="Eukaryota"/>
</dbReference>
<dbReference type="HOGENOM" id="CLU_028225_3_0_1"/>
<dbReference type="InParanoid" id="Q9FDX8"/>
<dbReference type="OMA" id="NQVASRH"/>
<dbReference type="OrthoDB" id="153872at2759"/>
<dbReference type="PlantReactome" id="R-OSA-8934036">
    <property type="pathway name" value="Long day regulated expression of florigens"/>
</dbReference>
<dbReference type="PlantReactome" id="R-OSA-8934108">
    <property type="pathway name" value="Short day regulated expression of florigens"/>
</dbReference>
<dbReference type="Proteomes" id="UP000000763">
    <property type="component" value="Chromosome 6"/>
</dbReference>
<dbReference type="Proteomes" id="UP000059680">
    <property type="component" value="Chromosome 6"/>
</dbReference>
<dbReference type="ExpressionAtlas" id="Q9FDX8">
    <property type="expression patterns" value="differential"/>
</dbReference>
<dbReference type="GO" id="GO:0005634">
    <property type="term" value="C:nucleus"/>
    <property type="evidence" value="ECO:0000318"/>
    <property type="project" value="GO_Central"/>
</dbReference>
<dbReference type="GO" id="GO:0003677">
    <property type="term" value="F:DNA binding"/>
    <property type="evidence" value="ECO:0007669"/>
    <property type="project" value="UniProtKB-KW"/>
</dbReference>
<dbReference type="GO" id="GO:0003700">
    <property type="term" value="F:DNA-binding transcription factor activity"/>
    <property type="evidence" value="ECO:0000250"/>
    <property type="project" value="Gramene"/>
</dbReference>
<dbReference type="GO" id="GO:0008270">
    <property type="term" value="F:zinc ion binding"/>
    <property type="evidence" value="ECO:0007669"/>
    <property type="project" value="UniProtKB-KW"/>
</dbReference>
<dbReference type="GO" id="GO:0030154">
    <property type="term" value="P:cell differentiation"/>
    <property type="evidence" value="ECO:0007669"/>
    <property type="project" value="UniProtKB-KW"/>
</dbReference>
<dbReference type="GO" id="GO:0009908">
    <property type="term" value="P:flower development"/>
    <property type="evidence" value="ECO:0007669"/>
    <property type="project" value="UniProtKB-KW"/>
</dbReference>
<dbReference type="GO" id="GO:0048571">
    <property type="term" value="P:long-day photoperiodism"/>
    <property type="evidence" value="ECO:0000270"/>
    <property type="project" value="Gramene"/>
</dbReference>
<dbReference type="GO" id="GO:0045892">
    <property type="term" value="P:negative regulation of DNA-templated transcription"/>
    <property type="evidence" value="ECO:0000315"/>
    <property type="project" value="UniProtKB"/>
</dbReference>
<dbReference type="GO" id="GO:0048579">
    <property type="term" value="P:negative regulation of long-day photoperiodism, flowering"/>
    <property type="evidence" value="ECO:0000315"/>
    <property type="project" value="UniProtKB"/>
</dbReference>
<dbReference type="GO" id="GO:0048576">
    <property type="term" value="P:positive regulation of short-day photoperiodism, flowering"/>
    <property type="evidence" value="ECO:0000315"/>
    <property type="project" value="UniProtKB"/>
</dbReference>
<dbReference type="GO" id="GO:0009909">
    <property type="term" value="P:regulation of flower development"/>
    <property type="evidence" value="ECO:0000315"/>
    <property type="project" value="UniProtKB"/>
</dbReference>
<dbReference type="GO" id="GO:2000028">
    <property type="term" value="P:regulation of photoperiodism, flowering"/>
    <property type="evidence" value="ECO:0000318"/>
    <property type="project" value="GO_Central"/>
</dbReference>
<dbReference type="GO" id="GO:0048572">
    <property type="term" value="P:short-day photoperiodism"/>
    <property type="evidence" value="ECO:0000270"/>
    <property type="project" value="Gramene"/>
</dbReference>
<dbReference type="CDD" id="cd19821">
    <property type="entry name" value="Bbox1_BBX-like"/>
    <property type="match status" value="1"/>
</dbReference>
<dbReference type="InterPro" id="IPR010402">
    <property type="entry name" value="CCT_domain"/>
</dbReference>
<dbReference type="InterPro" id="IPR045281">
    <property type="entry name" value="CONSTANS-like"/>
</dbReference>
<dbReference type="InterPro" id="IPR049808">
    <property type="entry name" value="CONSTANS-like_Bbox1"/>
</dbReference>
<dbReference type="InterPro" id="IPR000315">
    <property type="entry name" value="Znf_B-box"/>
</dbReference>
<dbReference type="PANTHER" id="PTHR31319:SF39">
    <property type="entry name" value="ZINC FINGER PROTEIN CONSTANS-LIKE 1"/>
    <property type="match status" value="1"/>
</dbReference>
<dbReference type="PANTHER" id="PTHR31319">
    <property type="entry name" value="ZINC FINGER PROTEIN CONSTANS-LIKE 4"/>
    <property type="match status" value="1"/>
</dbReference>
<dbReference type="Pfam" id="PF06203">
    <property type="entry name" value="CCT"/>
    <property type="match status" value="1"/>
</dbReference>
<dbReference type="Pfam" id="PF00643">
    <property type="entry name" value="zf-B_box"/>
    <property type="match status" value="1"/>
</dbReference>
<dbReference type="SMART" id="SM00336">
    <property type="entry name" value="BBOX"/>
    <property type="match status" value="2"/>
</dbReference>
<dbReference type="PROSITE" id="PS51017">
    <property type="entry name" value="CCT"/>
    <property type="match status" value="1"/>
</dbReference>
<dbReference type="PROSITE" id="PS50119">
    <property type="entry name" value="ZF_BBOX"/>
    <property type="match status" value="2"/>
</dbReference>
<gene>
    <name evidence="7 8" type="primary">HD1</name>
    <name evidence="8 9" type="synonym">SE1</name>
    <name evidence="10" type="ordered locus">Os06g0275000</name>
    <name evidence="10" type="ordered locus">LOC_Os06g16370</name>
    <name evidence="11" type="ORF">P0038C05.23</name>
    <name evidence="12" type="ORF">P0676F10.34</name>
</gene>
<name>HD1_ORYSJ</name>
<proteinExistence type="evidence at protein level"/>
<organism>
    <name type="scientific">Oryza sativa subsp. japonica</name>
    <name type="common">Rice</name>
    <dbReference type="NCBI Taxonomy" id="39947"/>
    <lineage>
        <taxon>Eukaryota</taxon>
        <taxon>Viridiplantae</taxon>
        <taxon>Streptophyta</taxon>
        <taxon>Embryophyta</taxon>
        <taxon>Tracheophyta</taxon>
        <taxon>Spermatophyta</taxon>
        <taxon>Magnoliopsida</taxon>
        <taxon>Liliopsida</taxon>
        <taxon>Poales</taxon>
        <taxon>Poaceae</taxon>
        <taxon>BOP clade</taxon>
        <taxon>Oryzoideae</taxon>
        <taxon>Oryzeae</taxon>
        <taxon>Oryzinae</taxon>
        <taxon>Oryza</taxon>
        <taxon>Oryza sativa</taxon>
    </lineage>
</organism>
<keyword id="KW-0002">3D-structure</keyword>
<keyword id="KW-0217">Developmental protein</keyword>
<keyword id="KW-0221">Differentiation</keyword>
<keyword id="KW-0238">DNA-binding</keyword>
<keyword id="KW-0287">Flowering</keyword>
<keyword id="KW-0479">Metal-binding</keyword>
<keyword id="KW-0539">Nucleus</keyword>
<keyword id="KW-0597">Phosphoprotein</keyword>
<keyword id="KW-1185">Reference proteome</keyword>
<keyword id="KW-0677">Repeat</keyword>
<keyword id="KW-0804">Transcription</keyword>
<keyword id="KW-0805">Transcription regulation</keyword>
<keyword id="KW-0862">Zinc</keyword>
<keyword id="KW-0863">Zinc-finger</keyword>
<accession>Q9FDX8</accession>
<accession>Q8H2H0</accession>